<evidence type="ECO:0000250" key="1">
    <source>
        <dbReference type="UniProtKB" id="Q96KA5"/>
    </source>
</evidence>
<evidence type="ECO:0000255" key="2"/>
<evidence type="ECO:0000256" key="3">
    <source>
        <dbReference type="SAM" id="MobiDB-lite"/>
    </source>
</evidence>
<evidence type="ECO:0000305" key="4"/>
<gene>
    <name type="primary">clptm1l</name>
    <name type="ORF">zgc:92063</name>
</gene>
<reference key="1">
    <citation type="submission" date="2004-07" db="EMBL/GenBank/DDBJ databases">
        <authorList>
            <consortium name="NIH - Zebrafish Gene Collection (ZGC) project"/>
        </authorList>
    </citation>
    <scope>NUCLEOTIDE SEQUENCE [LARGE SCALE MRNA]</scope>
</reference>
<organism>
    <name type="scientific">Danio rerio</name>
    <name type="common">Zebrafish</name>
    <name type="synonym">Brachydanio rerio</name>
    <dbReference type="NCBI Taxonomy" id="7955"/>
    <lineage>
        <taxon>Eukaryota</taxon>
        <taxon>Metazoa</taxon>
        <taxon>Chordata</taxon>
        <taxon>Craniata</taxon>
        <taxon>Vertebrata</taxon>
        <taxon>Euteleostomi</taxon>
        <taxon>Actinopterygii</taxon>
        <taxon>Neopterygii</taxon>
        <taxon>Teleostei</taxon>
        <taxon>Ostariophysi</taxon>
        <taxon>Cypriniformes</taxon>
        <taxon>Danionidae</taxon>
        <taxon>Danioninae</taxon>
        <taxon>Danio</taxon>
    </lineage>
</organism>
<name>CLP1L_DANRE</name>
<dbReference type="EMBL" id="BC075876">
    <property type="protein sequence ID" value="AAH75876.1"/>
    <property type="molecule type" value="mRNA"/>
</dbReference>
<dbReference type="RefSeq" id="NP_001002380.1">
    <property type="nucleotide sequence ID" value="NM_001002380.1"/>
</dbReference>
<dbReference type="FunCoup" id="Q6DHU1">
    <property type="interactions" value="1803"/>
</dbReference>
<dbReference type="STRING" id="7955.ENSDARP00000008246"/>
<dbReference type="GlyCosmos" id="Q6DHU1">
    <property type="glycosylation" value="3 sites, No reported glycans"/>
</dbReference>
<dbReference type="PaxDb" id="7955-ENSDARP00000008246"/>
<dbReference type="Ensembl" id="ENSDART00000004585">
    <property type="protein sequence ID" value="ENSDARP00000008246"/>
    <property type="gene ID" value="ENSDARG00000021048"/>
</dbReference>
<dbReference type="GeneID" id="436653"/>
<dbReference type="KEGG" id="dre:436653"/>
<dbReference type="AGR" id="ZFIN:ZDB-GENE-040718-75"/>
<dbReference type="CTD" id="81037"/>
<dbReference type="ZFIN" id="ZDB-GENE-040718-75">
    <property type="gene designation" value="clptm1l"/>
</dbReference>
<dbReference type="eggNOG" id="KOG2489">
    <property type="taxonomic scope" value="Eukaryota"/>
</dbReference>
<dbReference type="HOGENOM" id="CLU_019907_4_1_1"/>
<dbReference type="InParanoid" id="Q6DHU1"/>
<dbReference type="OMA" id="TTMWRAF"/>
<dbReference type="OrthoDB" id="378564at2759"/>
<dbReference type="PhylomeDB" id="Q6DHU1"/>
<dbReference type="TreeFam" id="TF318501"/>
<dbReference type="PRO" id="PR:Q6DHU1"/>
<dbReference type="Proteomes" id="UP000000437">
    <property type="component" value="Chromosome 19"/>
</dbReference>
<dbReference type="Bgee" id="ENSDARG00000021048">
    <property type="expression patterns" value="Expressed in mature ovarian follicle and 26 other cell types or tissues"/>
</dbReference>
<dbReference type="GO" id="GO:0012505">
    <property type="term" value="C:endomembrane system"/>
    <property type="evidence" value="ECO:0000318"/>
    <property type="project" value="GO_Central"/>
</dbReference>
<dbReference type="GO" id="GO:0005789">
    <property type="term" value="C:endoplasmic reticulum membrane"/>
    <property type="evidence" value="ECO:0000250"/>
    <property type="project" value="UniProtKB"/>
</dbReference>
<dbReference type="GO" id="GO:0016020">
    <property type="term" value="C:membrane"/>
    <property type="evidence" value="ECO:0000318"/>
    <property type="project" value="GO_Central"/>
</dbReference>
<dbReference type="GO" id="GO:0017128">
    <property type="term" value="F:phospholipid scramblase activity"/>
    <property type="evidence" value="ECO:0000250"/>
    <property type="project" value="UniProtKB"/>
</dbReference>
<dbReference type="GO" id="GO:0006915">
    <property type="term" value="P:apoptotic process"/>
    <property type="evidence" value="ECO:0007669"/>
    <property type="project" value="UniProtKB-KW"/>
</dbReference>
<dbReference type="InterPro" id="IPR008429">
    <property type="entry name" value="CLPTM1"/>
</dbReference>
<dbReference type="PANTHER" id="PTHR21347">
    <property type="entry name" value="CLEFT LIP AND PALATE ASSOCIATED TRANSMEMBRANE PROTEIN-RELATED"/>
    <property type="match status" value="1"/>
</dbReference>
<dbReference type="PANTHER" id="PTHR21347:SF0">
    <property type="entry name" value="LIPID SCRAMBLASE CLPTM1L"/>
    <property type="match status" value="1"/>
</dbReference>
<dbReference type="Pfam" id="PF05602">
    <property type="entry name" value="CLPTM1"/>
    <property type="match status" value="1"/>
</dbReference>
<comment type="function">
    <text evidence="1">Scramblase that mediates the translocation of glucosaminylphosphatidylinositol (alpha-D-GlcN-(1-6)-(1,2-diacyl-sn-glycero-3-phospho)-1D-myo-inositol, GlcN-PI) across the endoplasmic reticulum (ER) membrane, from the cytosolic leaflet to the luminal leaflet of the ER membrane, where it participates in the biosynthesis of glycosylphosphatidylinositol (GPI). GPI is a lipid glycoconjugate involved in post-translational modification of proteins. Can also translocate 1,2-diacyl-sn-glycero-3-phospho-(1D-myo-inositol) (phosphatidylinositol or PI), as well as several other phospholipids (1,2-diacyl-sn-glycero-3-phosphocholine, 1,2-diacyl-sn-glycero-3-phosphoethanolamine), and N-acetylglucosaminylphosphatidylinositol (GlcNAc-PI) in vitro.</text>
</comment>
<comment type="catalytic activity">
    <reaction evidence="1">
        <text>a 6-(alpha-D-glucosaminyl)-1-(1,2-diacyl-sn-glycero-3-phospho)-1D-myo-inositol(in) = a 6-(alpha-D-glucosaminyl)-1-(1,2-diacyl-sn-glycero-3-phospho)-1D-myo-inositol(out)</text>
        <dbReference type="Rhea" id="RHEA:71491"/>
        <dbReference type="ChEBI" id="CHEBI:57997"/>
    </reaction>
</comment>
<comment type="catalytic activity">
    <reaction evidence="1">
        <text>6-(alpha-D-glucosaminyl)-(1-octadecanoyl,2-(9Z)-octadecenoyl-sn-glycero-3-phospho)-1D-myo-inositol(in) = 6-(alpha-D-glucosaminyl)-(1-octadecanoyl,2-(9Z)-octadecenoyl-sn-glycero-3-phospho)-1D-myo-inositol(out)</text>
        <dbReference type="Rhea" id="RHEA:71495"/>
        <dbReference type="ChEBI" id="CHEBI:190691"/>
    </reaction>
</comment>
<comment type="catalytic activity">
    <reaction evidence="1">
        <text>a 1,2-diacyl-sn-glycero-3-phospho-(1D-myo-inositol)(in) = a 1,2-diacyl-sn-glycero-3-phospho-(1D-myo-inositol)(out)</text>
        <dbReference type="Rhea" id="RHEA:38691"/>
        <dbReference type="ChEBI" id="CHEBI:57880"/>
    </reaction>
</comment>
<comment type="catalytic activity">
    <reaction evidence="1">
        <text>a 1,2-diacyl-sn-glycero-3-phosphocholine(in) = a 1,2-diacyl-sn-glycero-3-phosphocholine(out)</text>
        <dbReference type="Rhea" id="RHEA:38571"/>
        <dbReference type="ChEBI" id="CHEBI:57643"/>
    </reaction>
</comment>
<comment type="catalytic activity">
    <reaction evidence="1">
        <text>a 1,2-diacyl-sn-glycero-3-phosphoethanolamine(in) = a 1,2-diacyl-sn-glycero-3-phosphoethanolamine(out)</text>
        <dbReference type="Rhea" id="RHEA:38895"/>
        <dbReference type="ChEBI" id="CHEBI:64612"/>
    </reaction>
</comment>
<comment type="subcellular location">
    <subcellularLocation>
        <location evidence="4">Endoplasmic reticulum membrane</location>
        <topology evidence="2">Multi-pass membrane protein</topology>
    </subcellularLocation>
</comment>
<comment type="similarity">
    <text evidence="4">Belongs to the CLPTM1 family.</text>
</comment>
<feature type="chain" id="PRO_0000331304" description="Lipid scramblase CLPTM1L">
    <location>
        <begin position="1"/>
        <end position="538"/>
    </location>
</feature>
<feature type="topological domain" description="Cytoplasmic" evidence="2">
    <location>
        <begin position="1"/>
        <end position="9"/>
    </location>
</feature>
<feature type="transmembrane region" description="Helical" evidence="2">
    <location>
        <begin position="10"/>
        <end position="30"/>
    </location>
</feature>
<feature type="topological domain" description="Extracellular" evidence="2">
    <location>
        <begin position="31"/>
        <end position="284"/>
    </location>
</feature>
<feature type="transmembrane region" description="Helical" evidence="2">
    <location>
        <begin position="285"/>
        <end position="305"/>
    </location>
</feature>
<feature type="topological domain" description="Cytoplasmic" evidence="2">
    <location>
        <begin position="306"/>
        <end position="324"/>
    </location>
</feature>
<feature type="transmembrane region" description="Helical" evidence="2">
    <location>
        <begin position="325"/>
        <end position="341"/>
    </location>
</feature>
<feature type="topological domain" description="Extracellular" evidence="2">
    <location>
        <begin position="342"/>
        <end position="402"/>
    </location>
</feature>
<feature type="transmembrane region" description="Helical" evidence="2">
    <location>
        <begin position="403"/>
        <end position="423"/>
    </location>
</feature>
<feature type="topological domain" description="Cytoplasmic" evidence="2">
    <location>
        <begin position="424"/>
        <end position="428"/>
    </location>
</feature>
<feature type="transmembrane region" description="Helical" evidence="2">
    <location>
        <begin position="429"/>
        <end position="449"/>
    </location>
</feature>
<feature type="topological domain" description="Extracellular" evidence="2">
    <location>
        <begin position="450"/>
        <end position="538"/>
    </location>
</feature>
<feature type="region of interest" description="Disordered" evidence="3">
    <location>
        <begin position="140"/>
        <end position="166"/>
    </location>
</feature>
<feature type="glycosylation site" description="N-linked (GlcNAc...) asparagine" evidence="2">
    <location>
        <position position="90"/>
    </location>
</feature>
<feature type="glycosylation site" description="N-linked (GlcNAc...) asparagine" evidence="2">
    <location>
        <position position="100"/>
    </location>
</feature>
<feature type="glycosylation site" description="N-linked (GlcNAc...) asparagine" evidence="2">
    <location>
        <position position="229"/>
    </location>
</feature>
<sequence>MFPKTSFTSLIVGVFLLYVLHTCWVMYGIVYTKPCEKRRAESCISPYLAAKPRLQLSVYTALRPNADGGHSLIHREEEFDVNTKFEKLVNVSLPKKTRKNGTLYAMVFLHQAGVSPWQDPHQVHLVTQLTTYMLPKPPEISLITGQDEPEKPDQQKQSSDSELDRPVSHWRSRLTLNVVSENFLFDREALPGDVHRYMRVYQSGKKMIYLPLLFVDELSNRVKDLMEINSSSTELPLTITYDSIALGKLRFWIHMQDAVYSLQQFGFTEKDADEIKGIFVDTNLYFLALTFFVAAFHLLFDFLAFKNDISFWKHKKSMVGMSSKAVLWRCFSTIVIFLYLLDEQTSLLVLVPAGIGSLIEVWKVKKAFKIHVIWRGLTPTFLFGKLDESEKRTEEYDTLAMKYLSYLLYPLCVGGAVYALVFVKYKSWYSWIINSLVNGVYAFGFLFMLPQLFVNYKLKSVAHLPWKAFMYKAFNTFIDDVFAFIITMPTSHRLACFRDDVVFLVYLYQRWLYPVDRSRVNEYGVSYDEKPKGKSHED</sequence>
<keyword id="KW-0053">Apoptosis</keyword>
<keyword id="KW-0256">Endoplasmic reticulum</keyword>
<keyword id="KW-0325">Glycoprotein</keyword>
<keyword id="KW-0445">Lipid transport</keyword>
<keyword id="KW-0472">Membrane</keyword>
<keyword id="KW-1185">Reference proteome</keyword>
<keyword id="KW-0812">Transmembrane</keyword>
<keyword id="KW-1133">Transmembrane helix</keyword>
<keyword id="KW-0813">Transport</keyword>
<accession>Q6DHU1</accession>
<proteinExistence type="evidence at transcript level"/>
<protein>
    <recommendedName>
        <fullName evidence="4">Lipid scramblase CLPTM1L</fullName>
    </recommendedName>
    <alternativeName>
        <fullName evidence="1">Cisplatin resistance-related protein 9</fullName>
        <shortName>CRR9p</shortName>
    </alternativeName>
    <alternativeName>
        <fullName>Cleft lip and palate transmembrane protein 1-like protein</fullName>
        <shortName>CLPTM1-like protein</shortName>
    </alternativeName>
</protein>